<comment type="function">
    <text evidence="1">Catalyzes the phosphorylation of N-acetylmannosamine (ManNAc) to ManNAc-6-P.</text>
</comment>
<comment type="catalytic activity">
    <reaction>
        <text>an N-acyl-D-mannosamine + ATP = an N-acyl-D-mannosamine 6-phosphate + ADP + H(+)</text>
        <dbReference type="Rhea" id="RHEA:23832"/>
        <dbReference type="ChEBI" id="CHEBI:15378"/>
        <dbReference type="ChEBI" id="CHEBI:16062"/>
        <dbReference type="ChEBI" id="CHEBI:30616"/>
        <dbReference type="ChEBI" id="CHEBI:57666"/>
        <dbReference type="ChEBI" id="CHEBI:456216"/>
        <dbReference type="EC" id="2.7.1.60"/>
    </reaction>
</comment>
<comment type="pathway">
    <text>Amino-sugar metabolism; N-acetylneuraminate degradation; D-fructose 6-phosphate from N-acetylneuraminate: step 2/5.</text>
</comment>
<comment type="subunit">
    <text evidence="1">Homodimer.</text>
</comment>
<comment type="similarity">
    <text evidence="3">Belongs to the ROK (NagC/XylR) family. NanK subfamily.</text>
</comment>
<protein>
    <recommendedName>
        <fullName>N-acetylmannosamine kinase</fullName>
        <ecNumber>2.7.1.60</ecNumber>
    </recommendedName>
    <alternativeName>
        <fullName>ManNAc kinase</fullName>
    </alternativeName>
    <alternativeName>
        <fullName>N-acetyl-D-mannosamine kinase</fullName>
    </alternativeName>
</protein>
<dbReference type="EC" id="2.7.1.60"/>
<dbReference type="EMBL" id="L42023">
    <property type="protein sequence ID" value="AAC21816.1"/>
    <property type="molecule type" value="Genomic_DNA"/>
</dbReference>
<dbReference type="PIR" id="H64050">
    <property type="entry name" value="H64050"/>
</dbReference>
<dbReference type="RefSeq" id="NP_438313.1">
    <property type="nucleotide sequence ID" value="NC_000907.1"/>
</dbReference>
<dbReference type="SMR" id="P44541"/>
<dbReference type="STRING" id="71421.HI_0144"/>
<dbReference type="EnsemblBacteria" id="AAC21816">
    <property type="protein sequence ID" value="AAC21816"/>
    <property type="gene ID" value="HI_0144"/>
</dbReference>
<dbReference type="KEGG" id="hin:HI_0144"/>
<dbReference type="PATRIC" id="fig|71421.8.peg.146"/>
<dbReference type="eggNOG" id="COG1940">
    <property type="taxonomic scope" value="Bacteria"/>
</dbReference>
<dbReference type="HOGENOM" id="CLU_036604_0_4_6"/>
<dbReference type="OrthoDB" id="8772678at2"/>
<dbReference type="PhylomeDB" id="P44541"/>
<dbReference type="BioCyc" id="HINF71421:G1GJ1-156-MONOMER"/>
<dbReference type="UniPathway" id="UPA00629">
    <property type="reaction ID" value="UER00681"/>
</dbReference>
<dbReference type="Proteomes" id="UP000000579">
    <property type="component" value="Chromosome"/>
</dbReference>
<dbReference type="GO" id="GO:0005524">
    <property type="term" value="F:ATP binding"/>
    <property type="evidence" value="ECO:0007669"/>
    <property type="project" value="UniProtKB-UniRule"/>
</dbReference>
<dbReference type="GO" id="GO:0009384">
    <property type="term" value="F:N-acylmannosamine kinase activity"/>
    <property type="evidence" value="ECO:0000318"/>
    <property type="project" value="GO_Central"/>
</dbReference>
<dbReference type="GO" id="GO:0008270">
    <property type="term" value="F:zinc ion binding"/>
    <property type="evidence" value="ECO:0007669"/>
    <property type="project" value="UniProtKB-UniRule"/>
</dbReference>
<dbReference type="GO" id="GO:0019262">
    <property type="term" value="P:N-acetylneuraminate catabolic process"/>
    <property type="evidence" value="ECO:0000318"/>
    <property type="project" value="GO_Central"/>
</dbReference>
<dbReference type="CDD" id="cd24069">
    <property type="entry name" value="ASKHA_NBD_ROK_EcNanK-like"/>
    <property type="match status" value="1"/>
</dbReference>
<dbReference type="FunFam" id="3.30.420.40:FF:000063">
    <property type="entry name" value="N-acetylmannosamine kinase"/>
    <property type="match status" value="1"/>
</dbReference>
<dbReference type="Gene3D" id="3.30.420.40">
    <property type="match status" value="2"/>
</dbReference>
<dbReference type="HAMAP" id="MF_01234">
    <property type="entry name" value="ManNAc_kinase"/>
    <property type="match status" value="1"/>
</dbReference>
<dbReference type="InterPro" id="IPR043129">
    <property type="entry name" value="ATPase_NBD"/>
</dbReference>
<dbReference type="InterPro" id="IPR023945">
    <property type="entry name" value="ManNAc_kinase_bac"/>
</dbReference>
<dbReference type="InterPro" id="IPR000600">
    <property type="entry name" value="ROK"/>
</dbReference>
<dbReference type="InterPro" id="IPR049874">
    <property type="entry name" value="ROK_cs"/>
</dbReference>
<dbReference type="NCBIfam" id="NF003461">
    <property type="entry name" value="PRK05082.1"/>
    <property type="match status" value="1"/>
</dbReference>
<dbReference type="PANTHER" id="PTHR18964:SF169">
    <property type="entry name" value="N-ACETYLMANNOSAMINE KINASE"/>
    <property type="match status" value="1"/>
</dbReference>
<dbReference type="PANTHER" id="PTHR18964">
    <property type="entry name" value="ROK (REPRESSOR, ORF, KINASE) FAMILY"/>
    <property type="match status" value="1"/>
</dbReference>
<dbReference type="Pfam" id="PF00480">
    <property type="entry name" value="ROK"/>
    <property type="match status" value="1"/>
</dbReference>
<dbReference type="SUPFAM" id="SSF53067">
    <property type="entry name" value="Actin-like ATPase domain"/>
    <property type="match status" value="1"/>
</dbReference>
<dbReference type="PROSITE" id="PS01125">
    <property type="entry name" value="ROK"/>
    <property type="match status" value="1"/>
</dbReference>
<feature type="chain" id="PRO_0000095699" description="N-acetylmannosamine kinase">
    <location>
        <begin position="1"/>
        <end position="300"/>
    </location>
</feature>
<feature type="binding site" evidence="2">
    <location>
        <begin position="5"/>
        <end position="12"/>
    </location>
    <ligand>
        <name>ATP</name>
        <dbReference type="ChEBI" id="CHEBI:30616"/>
    </ligand>
</feature>
<feature type="binding site" evidence="2">
    <location>
        <begin position="132"/>
        <end position="139"/>
    </location>
    <ligand>
        <name>ATP</name>
        <dbReference type="ChEBI" id="CHEBI:30616"/>
    </ligand>
</feature>
<feature type="binding site" evidence="1">
    <location>
        <position position="156"/>
    </location>
    <ligand>
        <name>Zn(2+)</name>
        <dbReference type="ChEBI" id="CHEBI:29105"/>
    </ligand>
</feature>
<feature type="binding site" evidence="1">
    <location>
        <position position="166"/>
    </location>
    <ligand>
        <name>Zn(2+)</name>
        <dbReference type="ChEBI" id="CHEBI:29105"/>
    </ligand>
</feature>
<feature type="binding site" evidence="1">
    <location>
        <position position="168"/>
    </location>
    <ligand>
        <name>Zn(2+)</name>
        <dbReference type="ChEBI" id="CHEBI:29105"/>
    </ligand>
</feature>
<feature type="binding site" evidence="1">
    <location>
        <position position="173"/>
    </location>
    <ligand>
        <name>Zn(2+)</name>
        <dbReference type="ChEBI" id="CHEBI:29105"/>
    </ligand>
</feature>
<reference key="1">
    <citation type="journal article" date="1995" name="Science">
        <title>Whole-genome random sequencing and assembly of Haemophilus influenzae Rd.</title>
        <authorList>
            <person name="Fleischmann R.D."/>
            <person name="Adams M.D."/>
            <person name="White O."/>
            <person name="Clayton R.A."/>
            <person name="Kirkness E.F."/>
            <person name="Kerlavage A.R."/>
            <person name="Bult C.J."/>
            <person name="Tomb J.-F."/>
            <person name="Dougherty B.A."/>
            <person name="Merrick J.M."/>
            <person name="McKenney K."/>
            <person name="Sutton G.G."/>
            <person name="FitzHugh W."/>
            <person name="Fields C.A."/>
            <person name="Gocayne J.D."/>
            <person name="Scott J.D."/>
            <person name="Shirley R."/>
            <person name="Liu L.-I."/>
            <person name="Glodek A."/>
            <person name="Kelley J.M."/>
            <person name="Weidman J.F."/>
            <person name="Phillips C.A."/>
            <person name="Spriggs T."/>
            <person name="Hedblom E."/>
            <person name="Cotton M.D."/>
            <person name="Utterback T.R."/>
            <person name="Hanna M.C."/>
            <person name="Nguyen D.T."/>
            <person name="Saudek D.M."/>
            <person name="Brandon R.C."/>
            <person name="Fine L.D."/>
            <person name="Fritchman J.L."/>
            <person name="Fuhrmann J.L."/>
            <person name="Geoghagen N.S.M."/>
            <person name="Gnehm C.L."/>
            <person name="McDonald L.A."/>
            <person name="Small K.V."/>
            <person name="Fraser C.M."/>
            <person name="Smith H.O."/>
            <person name="Venter J.C."/>
        </authorList>
    </citation>
    <scope>NUCLEOTIDE SEQUENCE [LARGE SCALE GENOMIC DNA]</scope>
    <source>
        <strain>ATCC 51907 / DSM 11121 / KW20 / Rd</strain>
    </source>
</reference>
<reference key="2">
    <citation type="journal article" date="2000" name="Electrophoresis">
        <title>Two-dimensional map of the proteome of Haemophilus influenzae.</title>
        <authorList>
            <person name="Langen H."/>
            <person name="Takacs B."/>
            <person name="Evers S."/>
            <person name="Berndt P."/>
            <person name="Lahm H.W."/>
            <person name="Wipf B."/>
            <person name="Gray C."/>
            <person name="Fountoulakis M."/>
        </authorList>
    </citation>
    <scope>IDENTIFICATION BY MASS SPECTROMETRY</scope>
    <source>
        <strain>ATCC 51907 / DSM 11121 / KW20 / Rd</strain>
    </source>
</reference>
<gene>
    <name type="primary">nanK</name>
    <name type="ordered locus">HI_0144</name>
</gene>
<sequence>MRCLALDIGGTKIAAAIVKNGEIEQRQQIHTPRENVVEGMHQALGKLLADYEGQFDYVAVASTGIINNGILSALNPKNLGGLAEFPLKASIAKHTDKPIGLLNDAQAATYAEYQLQNSEQVSNFVFITVSTGVGGGIVLNQILQTGSRGIAGHIGHTLADPNGAICGCGRRGCVEAIASGRAIEAVSSQWEEPCDPKEVFERFRKNDEKATALVERSAKAIANLIADLVISLDIQKIAIGGSVGLAEGYLSLVEKYLQDFPSIYCCEIETAKFGQDAGLIGAAYWVKDVLLDKPEGTIYG</sequence>
<name>NANK_HAEIN</name>
<keyword id="KW-0067">ATP-binding</keyword>
<keyword id="KW-0119">Carbohydrate metabolism</keyword>
<keyword id="KW-0418">Kinase</keyword>
<keyword id="KW-0479">Metal-binding</keyword>
<keyword id="KW-0547">Nucleotide-binding</keyword>
<keyword id="KW-1185">Reference proteome</keyword>
<keyword id="KW-0808">Transferase</keyword>
<keyword id="KW-0862">Zinc</keyword>
<organism>
    <name type="scientific">Haemophilus influenzae (strain ATCC 51907 / DSM 11121 / KW20 / Rd)</name>
    <dbReference type="NCBI Taxonomy" id="71421"/>
    <lineage>
        <taxon>Bacteria</taxon>
        <taxon>Pseudomonadati</taxon>
        <taxon>Pseudomonadota</taxon>
        <taxon>Gammaproteobacteria</taxon>
        <taxon>Pasteurellales</taxon>
        <taxon>Pasteurellaceae</taxon>
        <taxon>Haemophilus</taxon>
    </lineage>
</organism>
<proteinExistence type="evidence at protein level"/>
<evidence type="ECO:0000250" key="1"/>
<evidence type="ECO:0000255" key="2"/>
<evidence type="ECO:0000305" key="3"/>
<accession>P44541</accession>